<keyword id="KW-0067">ATP-binding</keyword>
<keyword id="KW-0963">Cytoplasm</keyword>
<keyword id="KW-0324">Glycolysis</keyword>
<keyword id="KW-0418">Kinase</keyword>
<keyword id="KW-0547">Nucleotide-binding</keyword>
<keyword id="KW-1185">Reference proteome</keyword>
<keyword id="KW-0808">Transferase</keyword>
<proteinExistence type="inferred from homology"/>
<feature type="chain" id="PRO_1000096381" description="Phosphoglycerate kinase">
    <location>
        <begin position="1"/>
        <end position="391"/>
    </location>
</feature>
<feature type="binding site" evidence="1">
    <location>
        <begin position="21"/>
        <end position="23"/>
    </location>
    <ligand>
        <name>substrate</name>
    </ligand>
</feature>
<feature type="binding site" evidence="1">
    <location>
        <position position="36"/>
    </location>
    <ligand>
        <name>substrate</name>
    </ligand>
</feature>
<feature type="binding site" evidence="1">
    <location>
        <begin position="59"/>
        <end position="62"/>
    </location>
    <ligand>
        <name>substrate</name>
    </ligand>
</feature>
<feature type="binding site" evidence="1">
    <location>
        <position position="113"/>
    </location>
    <ligand>
        <name>substrate</name>
    </ligand>
</feature>
<feature type="binding site" evidence="1">
    <location>
        <position position="146"/>
    </location>
    <ligand>
        <name>substrate</name>
    </ligand>
</feature>
<feature type="binding site" evidence="1">
    <location>
        <position position="197"/>
    </location>
    <ligand>
        <name>ATP</name>
        <dbReference type="ChEBI" id="CHEBI:30616"/>
    </ligand>
</feature>
<feature type="binding site" evidence="1">
    <location>
        <position position="319"/>
    </location>
    <ligand>
        <name>ATP</name>
        <dbReference type="ChEBI" id="CHEBI:30616"/>
    </ligand>
</feature>
<feature type="binding site" evidence="1">
    <location>
        <begin position="345"/>
        <end position="348"/>
    </location>
    <ligand>
        <name>ATP</name>
        <dbReference type="ChEBI" id="CHEBI:30616"/>
    </ligand>
</feature>
<gene>
    <name evidence="1" type="primary">pgk</name>
    <name type="ordered locus">Smlt3800</name>
</gene>
<comment type="catalytic activity">
    <reaction evidence="1">
        <text>(2R)-3-phosphoglycerate + ATP = (2R)-3-phospho-glyceroyl phosphate + ADP</text>
        <dbReference type="Rhea" id="RHEA:14801"/>
        <dbReference type="ChEBI" id="CHEBI:30616"/>
        <dbReference type="ChEBI" id="CHEBI:57604"/>
        <dbReference type="ChEBI" id="CHEBI:58272"/>
        <dbReference type="ChEBI" id="CHEBI:456216"/>
        <dbReference type="EC" id="2.7.2.3"/>
    </reaction>
</comment>
<comment type="pathway">
    <text evidence="1">Carbohydrate degradation; glycolysis; pyruvate from D-glyceraldehyde 3-phosphate: step 2/5.</text>
</comment>
<comment type="subunit">
    <text evidence="1">Monomer.</text>
</comment>
<comment type="subcellular location">
    <subcellularLocation>
        <location evidence="1">Cytoplasm</location>
    </subcellularLocation>
</comment>
<comment type="similarity">
    <text evidence="1">Belongs to the phosphoglycerate kinase family.</text>
</comment>
<sequence>MSIVRMTDLDLSGKRVLIRQDLNVPIENGRITSEQRITASLPTLKRALEQGAAVMVTSHLGRPKEGVWSEADSLAPVAQRLSELLGREVPLVRDWVDGVEVQPGQLVLLENCRMNVGEGKDDEALSKKYAALCDVFVMDAFGTAHRAQASTHGVIRFAPVAAGGPLLMAELDALAQALDAPAKPLLAIVAGSKVSTKLELLANLVGKVDQLIVGGGIANTFIAAAGYNVGKSLYEPDLLDTAKKIVADAKARGADIPLPVDVVTAKQFMPDAVAEVKAVDAVAEDDLILDIGPQTAAQYAQLIDKAGTVVWNGPVGVFEFEAFSKGTEALARAIASSRAFSIAGGGDTLAAVDKFDIAQQVSYISTGGGAFLEFLEGKTLPAVAALDARGA</sequence>
<reference key="1">
    <citation type="journal article" date="2008" name="Genome Biol.">
        <title>The complete genome, comparative and functional analysis of Stenotrophomonas maltophilia reveals an organism heavily shielded by drug resistance determinants.</title>
        <authorList>
            <person name="Crossman L.C."/>
            <person name="Gould V.C."/>
            <person name="Dow J.M."/>
            <person name="Vernikos G.S."/>
            <person name="Okazaki A."/>
            <person name="Sebaihia M."/>
            <person name="Saunders D."/>
            <person name="Arrowsmith C."/>
            <person name="Carver T."/>
            <person name="Peters N."/>
            <person name="Adlem E."/>
            <person name="Kerhornou A."/>
            <person name="Lord A."/>
            <person name="Murphy L."/>
            <person name="Seeger K."/>
            <person name="Squares R."/>
            <person name="Rutter S."/>
            <person name="Quail M.A."/>
            <person name="Rajandream M.A."/>
            <person name="Harris D."/>
            <person name="Churcher C."/>
            <person name="Bentley S.D."/>
            <person name="Parkhill J."/>
            <person name="Thomson N.R."/>
            <person name="Avison M.B."/>
        </authorList>
    </citation>
    <scope>NUCLEOTIDE SEQUENCE [LARGE SCALE GENOMIC DNA]</scope>
    <source>
        <strain>K279a</strain>
    </source>
</reference>
<name>PGK_STRMK</name>
<accession>B2FSF3</accession>
<protein>
    <recommendedName>
        <fullName evidence="1">Phosphoglycerate kinase</fullName>
        <ecNumber evidence="1">2.7.2.3</ecNumber>
    </recommendedName>
</protein>
<organism>
    <name type="scientific">Stenotrophomonas maltophilia (strain K279a)</name>
    <dbReference type="NCBI Taxonomy" id="522373"/>
    <lineage>
        <taxon>Bacteria</taxon>
        <taxon>Pseudomonadati</taxon>
        <taxon>Pseudomonadota</taxon>
        <taxon>Gammaproteobacteria</taxon>
        <taxon>Lysobacterales</taxon>
        <taxon>Lysobacteraceae</taxon>
        <taxon>Stenotrophomonas</taxon>
        <taxon>Stenotrophomonas maltophilia group</taxon>
    </lineage>
</organism>
<evidence type="ECO:0000255" key="1">
    <source>
        <dbReference type="HAMAP-Rule" id="MF_00145"/>
    </source>
</evidence>
<dbReference type="EC" id="2.7.2.3" evidence="1"/>
<dbReference type="EMBL" id="AM743169">
    <property type="protein sequence ID" value="CAQ47207.1"/>
    <property type="molecule type" value="Genomic_DNA"/>
</dbReference>
<dbReference type="RefSeq" id="WP_012481128.1">
    <property type="nucleotide sequence ID" value="NC_010943.1"/>
</dbReference>
<dbReference type="SMR" id="B2FSF3"/>
<dbReference type="EnsemblBacteria" id="CAQ47207">
    <property type="protein sequence ID" value="CAQ47207"/>
    <property type="gene ID" value="Smlt3800"/>
</dbReference>
<dbReference type="KEGG" id="sml:Smlt3800"/>
<dbReference type="PATRIC" id="fig|522373.3.peg.3576"/>
<dbReference type="eggNOG" id="COG0126">
    <property type="taxonomic scope" value="Bacteria"/>
</dbReference>
<dbReference type="HOGENOM" id="CLU_025427_0_2_6"/>
<dbReference type="UniPathway" id="UPA00109">
    <property type="reaction ID" value="UER00185"/>
</dbReference>
<dbReference type="Proteomes" id="UP000008840">
    <property type="component" value="Chromosome"/>
</dbReference>
<dbReference type="GO" id="GO:0005829">
    <property type="term" value="C:cytosol"/>
    <property type="evidence" value="ECO:0007669"/>
    <property type="project" value="TreeGrafter"/>
</dbReference>
<dbReference type="GO" id="GO:0043531">
    <property type="term" value="F:ADP binding"/>
    <property type="evidence" value="ECO:0007669"/>
    <property type="project" value="TreeGrafter"/>
</dbReference>
<dbReference type="GO" id="GO:0005524">
    <property type="term" value="F:ATP binding"/>
    <property type="evidence" value="ECO:0007669"/>
    <property type="project" value="UniProtKB-KW"/>
</dbReference>
<dbReference type="GO" id="GO:0004618">
    <property type="term" value="F:phosphoglycerate kinase activity"/>
    <property type="evidence" value="ECO:0007669"/>
    <property type="project" value="UniProtKB-UniRule"/>
</dbReference>
<dbReference type="GO" id="GO:0006094">
    <property type="term" value="P:gluconeogenesis"/>
    <property type="evidence" value="ECO:0007669"/>
    <property type="project" value="TreeGrafter"/>
</dbReference>
<dbReference type="GO" id="GO:0006096">
    <property type="term" value="P:glycolytic process"/>
    <property type="evidence" value="ECO:0007669"/>
    <property type="project" value="UniProtKB-UniRule"/>
</dbReference>
<dbReference type="FunFam" id="3.40.50.1260:FF:000001">
    <property type="entry name" value="Phosphoglycerate kinase"/>
    <property type="match status" value="1"/>
</dbReference>
<dbReference type="FunFam" id="3.40.50.1260:FF:000002">
    <property type="entry name" value="Phosphoglycerate kinase"/>
    <property type="match status" value="1"/>
</dbReference>
<dbReference type="Gene3D" id="3.40.50.1260">
    <property type="entry name" value="Phosphoglycerate kinase, N-terminal domain"/>
    <property type="match status" value="2"/>
</dbReference>
<dbReference type="HAMAP" id="MF_00145">
    <property type="entry name" value="Phosphoglyc_kinase"/>
    <property type="match status" value="1"/>
</dbReference>
<dbReference type="InterPro" id="IPR001576">
    <property type="entry name" value="Phosphoglycerate_kinase"/>
</dbReference>
<dbReference type="InterPro" id="IPR015911">
    <property type="entry name" value="Phosphoglycerate_kinase_CS"/>
</dbReference>
<dbReference type="InterPro" id="IPR015824">
    <property type="entry name" value="Phosphoglycerate_kinase_N"/>
</dbReference>
<dbReference type="InterPro" id="IPR036043">
    <property type="entry name" value="Phosphoglycerate_kinase_sf"/>
</dbReference>
<dbReference type="PANTHER" id="PTHR11406">
    <property type="entry name" value="PHOSPHOGLYCERATE KINASE"/>
    <property type="match status" value="1"/>
</dbReference>
<dbReference type="PANTHER" id="PTHR11406:SF23">
    <property type="entry name" value="PHOSPHOGLYCERATE KINASE 1, CHLOROPLASTIC-RELATED"/>
    <property type="match status" value="1"/>
</dbReference>
<dbReference type="Pfam" id="PF00162">
    <property type="entry name" value="PGK"/>
    <property type="match status" value="1"/>
</dbReference>
<dbReference type="PIRSF" id="PIRSF000724">
    <property type="entry name" value="Pgk"/>
    <property type="match status" value="1"/>
</dbReference>
<dbReference type="PRINTS" id="PR00477">
    <property type="entry name" value="PHGLYCKINASE"/>
</dbReference>
<dbReference type="SUPFAM" id="SSF53748">
    <property type="entry name" value="Phosphoglycerate kinase"/>
    <property type="match status" value="1"/>
</dbReference>
<dbReference type="PROSITE" id="PS00111">
    <property type="entry name" value="PGLYCERATE_KINASE"/>
    <property type="match status" value="1"/>
</dbReference>